<gene>
    <name type="primary">mnmC</name>
    <name type="ordered locus">Veis_1221</name>
</gene>
<name>MNMC_VEREI</name>
<sequence length="623" mass="66034">MTQRGEVPDFLHGCGLPAAWAGLPQWRILETGFGFGLNFLATWAAWRADPHRPVLLHFVATEAQPVSAADLLRAGSARPGLAPLAQELSRQWWGLLPGLHRLRFDDGHVLLTLCLGDWQAQLRQQRQQLTVDSVYLHDLPQDWRPQRHPAPAGLPGLPGLKAVAACCRRGTRLASRCSTVRDALVQCGFTLHPAPGSDAQRDMLHAVYQPHWQPRTMRPAAAPATPGECMVIGGGIAGAATAASLARRGWQLRVLDQAAAPAAGASGLPAGIFAPHVSADDNLLSRLSRSGVRSTLEQARWRLREGLDWSHCGVLEHRADASPGLPARWSDGPGADGRQSAAHAALGALAQSGLPANASVCWHPQAGWIRPARLVAALLAQPGIRWQGACRVARLRRVQAPGAGPTAWQALDAQGRVLAQAPTVVIAAGAGSLELLEHRWPLQPVRGQVSWGLHGDPAAPLLPFPVNGHGHLVPRFPLGDDAQGPCAWVMGATFERGVEQMPPAPADVQAAHASHWARLQTLLPRMAPPLESAFAAARADAGLAASARAAQSWAAVRCTAPDRLPIVGPVDAAALPGLWVCSAMGARGLTLALLCGELLAARLQGEPLPIEHRLAKALDSGRM</sequence>
<reference key="1">
    <citation type="submission" date="2006-12" db="EMBL/GenBank/DDBJ databases">
        <title>Complete sequence of chromosome 1 of Verminephrobacter eiseniae EF01-2.</title>
        <authorList>
            <person name="Copeland A."/>
            <person name="Lucas S."/>
            <person name="Lapidus A."/>
            <person name="Barry K."/>
            <person name="Detter J.C."/>
            <person name="Glavina del Rio T."/>
            <person name="Dalin E."/>
            <person name="Tice H."/>
            <person name="Pitluck S."/>
            <person name="Chertkov O."/>
            <person name="Brettin T."/>
            <person name="Bruce D."/>
            <person name="Han C."/>
            <person name="Tapia R."/>
            <person name="Gilna P."/>
            <person name="Schmutz J."/>
            <person name="Larimer F."/>
            <person name="Land M."/>
            <person name="Hauser L."/>
            <person name="Kyrpides N."/>
            <person name="Kim E."/>
            <person name="Stahl D."/>
            <person name="Richardson P."/>
        </authorList>
    </citation>
    <scope>NUCLEOTIDE SEQUENCE [LARGE SCALE GENOMIC DNA]</scope>
    <source>
        <strain>EF01-2</strain>
    </source>
</reference>
<comment type="function">
    <text evidence="1">Catalyzes the last two steps in the biosynthesis of 5-methylaminomethyl-2-thiouridine (mnm(5)s(2)U) at the wobble position (U34) in tRNA. Catalyzes the FAD-dependent demodification of cmnm(5)s(2)U34 to nm(5)s(2)U34, followed by the transfer of a methyl group from S-adenosyl-L-methionine to nm(5)s(2)U34, to form mnm(5)s(2)U34 (By similarity).</text>
</comment>
<comment type="catalytic activity">
    <reaction>
        <text>5-aminomethyl-2-thiouridine(34) in tRNA + S-adenosyl-L-methionine = 5-methylaminomethyl-2-thiouridine(34) in tRNA + S-adenosyl-L-homocysteine + H(+)</text>
        <dbReference type="Rhea" id="RHEA:19569"/>
        <dbReference type="Rhea" id="RHEA-COMP:10195"/>
        <dbReference type="Rhea" id="RHEA-COMP:10197"/>
        <dbReference type="ChEBI" id="CHEBI:15378"/>
        <dbReference type="ChEBI" id="CHEBI:57856"/>
        <dbReference type="ChEBI" id="CHEBI:59789"/>
        <dbReference type="ChEBI" id="CHEBI:74454"/>
        <dbReference type="ChEBI" id="CHEBI:74455"/>
        <dbReference type="EC" id="2.1.1.61"/>
    </reaction>
</comment>
<comment type="cofactor">
    <cofactor evidence="1">
        <name>FAD</name>
        <dbReference type="ChEBI" id="CHEBI:57692"/>
    </cofactor>
</comment>
<comment type="subcellular location">
    <subcellularLocation>
        <location evidence="2">Cytoplasm</location>
    </subcellularLocation>
</comment>
<comment type="similarity">
    <text evidence="2">In the N-terminal section; belongs to the methyltransferase superfamily. tRNA (mnm(5)s(2)U34)-methyltransferase family.</text>
</comment>
<comment type="similarity">
    <text evidence="2">In the C-terminal section; belongs to the DAO family.</text>
</comment>
<keyword id="KW-0963">Cytoplasm</keyword>
<keyword id="KW-0274">FAD</keyword>
<keyword id="KW-0285">Flavoprotein</keyword>
<keyword id="KW-0489">Methyltransferase</keyword>
<keyword id="KW-0511">Multifunctional enzyme</keyword>
<keyword id="KW-0560">Oxidoreductase</keyword>
<keyword id="KW-1185">Reference proteome</keyword>
<keyword id="KW-0949">S-adenosyl-L-methionine</keyword>
<keyword id="KW-0808">Transferase</keyword>
<keyword id="KW-0819">tRNA processing</keyword>
<feature type="chain" id="PRO_0000348045" description="tRNA 5-methylaminomethyl-2-thiouridine biosynthesis bifunctional protein MnmC">
    <location>
        <begin position="1"/>
        <end position="623"/>
    </location>
</feature>
<feature type="region of interest" description="tRNA (mnm(5)s(2)U34)-methyltransferase">
    <location>
        <begin position="1"/>
        <end position="209"/>
    </location>
</feature>
<feature type="region of interest" description="FAD-dependent cmnm(5)s(2)U34 oxidoreductase">
    <location>
        <begin position="232"/>
        <end position="623"/>
    </location>
</feature>
<proteinExistence type="inferred from homology"/>
<accession>A1WH84</accession>
<dbReference type="EC" id="2.1.1.61"/>
<dbReference type="EC" id="1.5.-.-"/>
<dbReference type="EMBL" id="CP000542">
    <property type="protein sequence ID" value="ABM56991.1"/>
    <property type="molecule type" value="Genomic_DNA"/>
</dbReference>
<dbReference type="RefSeq" id="WP_011809002.1">
    <property type="nucleotide sequence ID" value="NC_008786.1"/>
</dbReference>
<dbReference type="SMR" id="A1WH84"/>
<dbReference type="STRING" id="391735.Veis_1221"/>
<dbReference type="GeneID" id="76459872"/>
<dbReference type="KEGG" id="vei:Veis_1221"/>
<dbReference type="eggNOG" id="COG0665">
    <property type="taxonomic scope" value="Bacteria"/>
</dbReference>
<dbReference type="eggNOG" id="COG4121">
    <property type="taxonomic scope" value="Bacteria"/>
</dbReference>
<dbReference type="HOGENOM" id="CLU_022427_1_0_4"/>
<dbReference type="OrthoDB" id="9786494at2"/>
<dbReference type="Proteomes" id="UP000000374">
    <property type="component" value="Chromosome"/>
</dbReference>
<dbReference type="GO" id="GO:0005737">
    <property type="term" value="C:cytoplasm"/>
    <property type="evidence" value="ECO:0007669"/>
    <property type="project" value="UniProtKB-SubCell"/>
</dbReference>
<dbReference type="GO" id="GO:0016645">
    <property type="term" value="F:oxidoreductase activity, acting on the CH-NH group of donors"/>
    <property type="evidence" value="ECO:0007669"/>
    <property type="project" value="InterPro"/>
</dbReference>
<dbReference type="GO" id="GO:0004808">
    <property type="term" value="F:tRNA (5-methylaminomethyl-2-thiouridylate)(34)-methyltransferase activity"/>
    <property type="evidence" value="ECO:0007669"/>
    <property type="project" value="UniProtKB-EC"/>
</dbReference>
<dbReference type="GO" id="GO:0032259">
    <property type="term" value="P:methylation"/>
    <property type="evidence" value="ECO:0007669"/>
    <property type="project" value="UniProtKB-KW"/>
</dbReference>
<dbReference type="GO" id="GO:0008033">
    <property type="term" value="P:tRNA processing"/>
    <property type="evidence" value="ECO:0007669"/>
    <property type="project" value="UniProtKB-KW"/>
</dbReference>
<dbReference type="Gene3D" id="3.30.9.10">
    <property type="entry name" value="D-Amino Acid Oxidase, subunit A, domain 2"/>
    <property type="match status" value="1"/>
</dbReference>
<dbReference type="Gene3D" id="3.50.50.60">
    <property type="entry name" value="FAD/NAD(P)-binding domain"/>
    <property type="match status" value="1"/>
</dbReference>
<dbReference type="Gene3D" id="3.40.50.150">
    <property type="entry name" value="Vaccinia Virus protein VP39"/>
    <property type="match status" value="1"/>
</dbReference>
<dbReference type="InterPro" id="IPR006076">
    <property type="entry name" value="FAD-dep_OxRdtase"/>
</dbReference>
<dbReference type="InterPro" id="IPR036188">
    <property type="entry name" value="FAD/NAD-bd_sf"/>
</dbReference>
<dbReference type="InterPro" id="IPR008471">
    <property type="entry name" value="MnmC-like_methylTransf"/>
</dbReference>
<dbReference type="InterPro" id="IPR029063">
    <property type="entry name" value="SAM-dependent_MTases_sf"/>
</dbReference>
<dbReference type="InterPro" id="IPR017610">
    <property type="entry name" value="tRNA_S-uridine_synth_MnmC_C"/>
</dbReference>
<dbReference type="NCBIfam" id="TIGR03197">
    <property type="entry name" value="MnmC_Cterm"/>
    <property type="match status" value="1"/>
</dbReference>
<dbReference type="PANTHER" id="PTHR13847">
    <property type="entry name" value="SARCOSINE DEHYDROGENASE-RELATED"/>
    <property type="match status" value="1"/>
</dbReference>
<dbReference type="PANTHER" id="PTHR13847:SF283">
    <property type="entry name" value="TRNA 5-METHYLAMINOMETHYL-2-THIOURIDINE BIOSYNTHESIS BIFUNCTIONAL PROTEIN MNMC"/>
    <property type="match status" value="1"/>
</dbReference>
<dbReference type="Pfam" id="PF01266">
    <property type="entry name" value="DAO"/>
    <property type="match status" value="1"/>
</dbReference>
<dbReference type="Pfam" id="PF05430">
    <property type="entry name" value="Methyltransf_30"/>
    <property type="match status" value="1"/>
</dbReference>
<dbReference type="SUPFAM" id="SSF51971">
    <property type="entry name" value="Nucleotide-binding domain"/>
    <property type="match status" value="1"/>
</dbReference>
<evidence type="ECO:0000250" key="1"/>
<evidence type="ECO:0000305" key="2"/>
<protein>
    <recommendedName>
        <fullName>tRNA 5-methylaminomethyl-2-thiouridine biosynthesis bifunctional protein MnmC</fullName>
        <shortName>tRNA mnm(5)s(2)U biosynthesis bifunctional protein</shortName>
    </recommendedName>
    <domain>
        <recommendedName>
            <fullName>tRNA (mnm(5)s(2)U34)-methyltransferase</fullName>
            <ecNumber>2.1.1.61</ecNumber>
        </recommendedName>
    </domain>
    <domain>
        <recommendedName>
            <fullName>FAD-dependent cmnm(5)s(2)U34 oxidoreductase</fullName>
            <ecNumber>1.5.-.-</ecNumber>
        </recommendedName>
    </domain>
</protein>
<organism>
    <name type="scientific">Verminephrobacter eiseniae (strain EF01-2)</name>
    <dbReference type="NCBI Taxonomy" id="391735"/>
    <lineage>
        <taxon>Bacteria</taxon>
        <taxon>Pseudomonadati</taxon>
        <taxon>Pseudomonadota</taxon>
        <taxon>Betaproteobacteria</taxon>
        <taxon>Burkholderiales</taxon>
        <taxon>Comamonadaceae</taxon>
        <taxon>Verminephrobacter</taxon>
    </lineage>
</organism>